<gene>
    <name evidence="1" type="primary">xseA</name>
    <name type="ordered locus">Exig_0905</name>
</gene>
<dbReference type="EC" id="3.1.11.6" evidence="1"/>
<dbReference type="EMBL" id="CP001022">
    <property type="protein sequence ID" value="ACB60385.1"/>
    <property type="molecule type" value="Genomic_DNA"/>
</dbReference>
<dbReference type="RefSeq" id="WP_012369809.1">
    <property type="nucleotide sequence ID" value="NC_010556.1"/>
</dbReference>
<dbReference type="SMR" id="B1YLQ2"/>
<dbReference type="STRING" id="262543.Exig_0905"/>
<dbReference type="KEGG" id="esi:Exig_0905"/>
<dbReference type="eggNOG" id="COG1570">
    <property type="taxonomic scope" value="Bacteria"/>
</dbReference>
<dbReference type="HOGENOM" id="CLU_023625_3_1_9"/>
<dbReference type="OrthoDB" id="9802795at2"/>
<dbReference type="Proteomes" id="UP000001681">
    <property type="component" value="Chromosome"/>
</dbReference>
<dbReference type="GO" id="GO:0005737">
    <property type="term" value="C:cytoplasm"/>
    <property type="evidence" value="ECO:0007669"/>
    <property type="project" value="UniProtKB-SubCell"/>
</dbReference>
<dbReference type="GO" id="GO:0009318">
    <property type="term" value="C:exodeoxyribonuclease VII complex"/>
    <property type="evidence" value="ECO:0007669"/>
    <property type="project" value="InterPro"/>
</dbReference>
<dbReference type="GO" id="GO:0008855">
    <property type="term" value="F:exodeoxyribonuclease VII activity"/>
    <property type="evidence" value="ECO:0007669"/>
    <property type="project" value="UniProtKB-UniRule"/>
</dbReference>
<dbReference type="GO" id="GO:0003676">
    <property type="term" value="F:nucleic acid binding"/>
    <property type="evidence" value="ECO:0007669"/>
    <property type="project" value="InterPro"/>
</dbReference>
<dbReference type="GO" id="GO:0006308">
    <property type="term" value="P:DNA catabolic process"/>
    <property type="evidence" value="ECO:0007669"/>
    <property type="project" value="UniProtKB-UniRule"/>
</dbReference>
<dbReference type="CDD" id="cd04489">
    <property type="entry name" value="ExoVII_LU_OBF"/>
    <property type="match status" value="1"/>
</dbReference>
<dbReference type="HAMAP" id="MF_00378">
    <property type="entry name" value="Exonuc_7_L"/>
    <property type="match status" value="1"/>
</dbReference>
<dbReference type="InterPro" id="IPR003753">
    <property type="entry name" value="Exonuc_VII_L"/>
</dbReference>
<dbReference type="InterPro" id="IPR020579">
    <property type="entry name" value="Exonuc_VII_lsu_C"/>
</dbReference>
<dbReference type="InterPro" id="IPR025824">
    <property type="entry name" value="OB-fold_nuc-bd_dom"/>
</dbReference>
<dbReference type="NCBIfam" id="TIGR00237">
    <property type="entry name" value="xseA"/>
    <property type="match status" value="1"/>
</dbReference>
<dbReference type="PANTHER" id="PTHR30008">
    <property type="entry name" value="EXODEOXYRIBONUCLEASE 7 LARGE SUBUNIT"/>
    <property type="match status" value="1"/>
</dbReference>
<dbReference type="PANTHER" id="PTHR30008:SF0">
    <property type="entry name" value="EXODEOXYRIBONUCLEASE 7 LARGE SUBUNIT"/>
    <property type="match status" value="1"/>
</dbReference>
<dbReference type="Pfam" id="PF02601">
    <property type="entry name" value="Exonuc_VII_L"/>
    <property type="match status" value="1"/>
</dbReference>
<dbReference type="Pfam" id="PF13742">
    <property type="entry name" value="tRNA_anti_2"/>
    <property type="match status" value="1"/>
</dbReference>
<protein>
    <recommendedName>
        <fullName evidence="1">Exodeoxyribonuclease 7 large subunit</fullName>
        <ecNumber evidence="1">3.1.11.6</ecNumber>
    </recommendedName>
    <alternativeName>
        <fullName evidence="1">Exodeoxyribonuclease VII large subunit</fullName>
        <shortName evidence="1">Exonuclease VII large subunit</shortName>
    </alternativeName>
</protein>
<reference key="1">
    <citation type="submission" date="2008-04" db="EMBL/GenBank/DDBJ databases">
        <title>Complete sequence of chromosome of Exiguobacterium sibiricum 255-15.</title>
        <authorList>
            <consortium name="US DOE Joint Genome Institute"/>
            <person name="Copeland A."/>
            <person name="Lucas S."/>
            <person name="Lapidus A."/>
            <person name="Glavina del Rio T."/>
            <person name="Dalin E."/>
            <person name="Tice H."/>
            <person name="Bruce D."/>
            <person name="Goodwin L."/>
            <person name="Pitluck S."/>
            <person name="Kiss H."/>
            <person name="Chertkov O."/>
            <person name="Monk C."/>
            <person name="Brettin T."/>
            <person name="Detter J.C."/>
            <person name="Han C."/>
            <person name="Kuske C.R."/>
            <person name="Schmutz J."/>
            <person name="Larimer F."/>
            <person name="Land M."/>
            <person name="Hauser L."/>
            <person name="Kyrpides N."/>
            <person name="Mikhailova N."/>
            <person name="Vishnivetskaya T."/>
            <person name="Rodrigues D.F."/>
            <person name="Gilichinsky D."/>
            <person name="Tiedje J."/>
            <person name="Richardson P."/>
        </authorList>
    </citation>
    <scope>NUCLEOTIDE SEQUENCE [LARGE SCALE GENOMIC DNA]</scope>
    <source>
        <strain>DSM 17290 / CCUG 55495 / CIP 109462 / JCM 13490 / 255-15</strain>
    </source>
</reference>
<keyword id="KW-0963">Cytoplasm</keyword>
<keyword id="KW-0269">Exonuclease</keyword>
<keyword id="KW-0378">Hydrolase</keyword>
<keyword id="KW-0540">Nuclease</keyword>
<keyword id="KW-1185">Reference proteome</keyword>
<accession>B1YLQ2</accession>
<feature type="chain" id="PRO_1000205673" description="Exodeoxyribonuclease 7 large subunit">
    <location>
        <begin position="1"/>
        <end position="447"/>
    </location>
</feature>
<evidence type="ECO:0000255" key="1">
    <source>
        <dbReference type="HAMAP-Rule" id="MF_00378"/>
    </source>
</evidence>
<sequence>MTNPLQVSELVQYVKRELENDSLLQQVQVVGEVSNFKRHSSGHLYFTLKDEQSRMKAVMFARDASRVKTDIRDGARVIITARISVYVASGEMQLYVERMMEDGVGALYEAYVQLKEDVEARGWFEAEQKLPLPAFPQKIGIVTSPKGAALHDIATTLRRRYPQAAIVFAPVLVQGKEAAPQIVRAIEWMNEHQACDVMIIGRGGGSIEELWAFNEMPVVTAIHQSRIPIVSAVGHETDFTIADFVADVRAATPTAAAELVTPEAAELAKRLNELNRRLTRHYAQYITERKDQVQRLATSYGLKSPRVLLGLKQERLDRAEMGLNRIGKQVLQSKQQALTDQVNRFARIAMQERLAEQGRQLVRTRKQLERIHTVLRTKQDRLHQMIARLDSVSPTQVMLRGYTYVEQDGRLVRSVTELSDQTFRVQFHDGSILAKREDEEDGNRTIL</sequence>
<proteinExistence type="inferred from homology"/>
<name>EX7L_EXIS2</name>
<organism>
    <name type="scientific">Exiguobacterium sibiricum (strain DSM 17290 / CCUG 55495 / CIP 109462 / JCM 13490 / 255-15)</name>
    <dbReference type="NCBI Taxonomy" id="262543"/>
    <lineage>
        <taxon>Bacteria</taxon>
        <taxon>Bacillati</taxon>
        <taxon>Bacillota</taxon>
        <taxon>Bacilli</taxon>
        <taxon>Bacillales</taxon>
        <taxon>Bacillales Family XII. Incertae Sedis</taxon>
        <taxon>Exiguobacterium</taxon>
    </lineage>
</organism>
<comment type="function">
    <text evidence="1">Bidirectionally degrades single-stranded DNA into large acid-insoluble oligonucleotides, which are then degraded further into small acid-soluble oligonucleotides.</text>
</comment>
<comment type="catalytic activity">
    <reaction evidence="1">
        <text>Exonucleolytic cleavage in either 5'- to 3'- or 3'- to 5'-direction to yield nucleoside 5'-phosphates.</text>
        <dbReference type="EC" id="3.1.11.6"/>
    </reaction>
</comment>
<comment type="subunit">
    <text evidence="1">Heterooligomer composed of large and small subunits.</text>
</comment>
<comment type="subcellular location">
    <subcellularLocation>
        <location evidence="1">Cytoplasm</location>
    </subcellularLocation>
</comment>
<comment type="similarity">
    <text evidence="1">Belongs to the XseA family.</text>
</comment>